<feature type="chain" id="PRO_0000108306" description="Cytochrome c">
    <location>
        <begin position="1"/>
        <end position="111"/>
    </location>
</feature>
<feature type="binding site" description="covalent" evidence="1 2">
    <location>
        <position position="22"/>
    </location>
    <ligand>
        <name>heme c</name>
        <dbReference type="ChEBI" id="CHEBI:61717"/>
    </ligand>
</feature>
<feature type="binding site" description="covalent" evidence="1 2">
    <location>
        <position position="25"/>
    </location>
    <ligand>
        <name>heme c</name>
        <dbReference type="ChEBI" id="CHEBI:61717"/>
    </ligand>
</feature>
<feature type="binding site" description="axial binding residue">
    <location>
        <position position="26"/>
    </location>
    <ligand>
        <name>heme c</name>
        <dbReference type="ChEBI" id="CHEBI:61717"/>
    </ligand>
    <ligandPart>
        <name>Fe</name>
        <dbReference type="ChEBI" id="CHEBI:18248"/>
    </ligandPart>
</feature>
<feature type="binding site" description="axial binding residue">
    <location>
        <position position="88"/>
    </location>
    <ligand>
        <name>heme c</name>
        <dbReference type="ChEBI" id="CHEBI:61717"/>
    </ligand>
    <ligandPart>
        <name>Fe</name>
        <dbReference type="ChEBI" id="CHEBI:18248"/>
    </ligandPart>
</feature>
<feature type="modified residue" description="N-acetylalanine" evidence="2">
    <location>
        <position position="1"/>
    </location>
</feature>
<feature type="modified residue" description="4-hydroxyproline; partial" evidence="2">
    <location>
        <position position="79"/>
    </location>
</feature>
<feature type="modified residue" description="N6,N6,N6-trimethyllysine" evidence="2">
    <location>
        <position position="80"/>
    </location>
</feature>
<feature type="modified residue" description="N6,N6,N6-trimethyllysine" evidence="2">
    <location>
        <position position="94"/>
    </location>
</feature>
<sequence length="111" mass="12024">ASFBZAPPGBVKAGEKIFKTKCAQCHTVEKGAGHKQGPNLNGLFGRQSGTTAGYSYSAANKNMAVQWGENTLYDYLLNPKKYIPGTKMVFPGLKKPQDRADLIAYLKZATA</sequence>
<comment type="function">
    <text>Electron carrier protein. The oxidized form of the cytochrome c heme group can accept an electron from the heme group of the cytochrome c1 subunit of cytochrome reductase. Cytochrome c then transfers this electron to the cytochrome oxidase complex, the final protein carrier in the mitochondrial electron-transport chain.</text>
</comment>
<comment type="subcellular location">
    <subcellularLocation>
        <location>Mitochondrion intermembrane space</location>
    </subcellularLocation>
    <text>Loosely associated with the inner membrane.</text>
</comment>
<comment type="PTM">
    <text>Binds 1 heme c group covalently per subunit.</text>
</comment>
<comment type="similarity">
    <text evidence="3">Belongs to the cytochrome c family.</text>
</comment>
<comment type="online information" name="Protein Spotlight">
    <link uri="https://www.proteinspotlight.org/back_issues/076"/>
    <text>Life shuttle - Issue 76 of November 2006</text>
</comment>
<keyword id="KW-0007">Acetylation</keyword>
<keyword id="KW-0903">Direct protein sequencing</keyword>
<keyword id="KW-0249">Electron transport</keyword>
<keyword id="KW-0349">Heme</keyword>
<keyword id="KW-0379">Hydroxylation</keyword>
<keyword id="KW-0408">Iron</keyword>
<keyword id="KW-0479">Metal-binding</keyword>
<keyword id="KW-0488">Methylation</keyword>
<keyword id="KW-0496">Mitochondrion</keyword>
<keyword id="KW-0679">Respiratory chain</keyword>
<keyword id="KW-0813">Transport</keyword>
<evidence type="ECO:0000255" key="1">
    <source>
        <dbReference type="PROSITE-ProRule" id="PRU00433"/>
    </source>
</evidence>
<evidence type="ECO:0000269" key="2">
    <source>
    </source>
</evidence>
<evidence type="ECO:0000305" key="3"/>
<protein>
    <recommendedName>
        <fullName>Cytochrome c</fullName>
    </recommendedName>
</protein>
<reference key="1">
    <citation type="journal article" date="1971" name="Biochem. J.">
        <title>The amino acid sequence of sesame (Sesamum indicum L.) and castor (Ricinus communis L.) cytochrome c.</title>
        <authorList>
            <person name="Thompson E.W."/>
            <person name="Richardson M."/>
            <person name="Boulter D."/>
        </authorList>
    </citation>
    <scope>PROTEIN SEQUENCE</scope>
    <scope>ACETYLATION AT ALA-1</scope>
    <scope>HYDROXYLATION AT PRO-79</scope>
    <scope>METHYLATION AT LYS-80 AND LYS-94</scope>
</reference>
<organism>
    <name type="scientific">Ricinus communis</name>
    <name type="common">Castor bean</name>
    <dbReference type="NCBI Taxonomy" id="3988"/>
    <lineage>
        <taxon>Eukaryota</taxon>
        <taxon>Viridiplantae</taxon>
        <taxon>Streptophyta</taxon>
        <taxon>Embryophyta</taxon>
        <taxon>Tracheophyta</taxon>
        <taxon>Spermatophyta</taxon>
        <taxon>Magnoliopsida</taxon>
        <taxon>eudicotyledons</taxon>
        <taxon>Gunneridae</taxon>
        <taxon>Pentapetalae</taxon>
        <taxon>rosids</taxon>
        <taxon>fabids</taxon>
        <taxon>Malpighiales</taxon>
        <taxon>Euphorbiaceae</taxon>
        <taxon>Acalyphoideae</taxon>
        <taxon>Acalypheae</taxon>
        <taxon>Ricinus</taxon>
    </lineage>
</organism>
<proteinExistence type="evidence at protein level"/>
<name>CYC_RICCO</name>
<accession>P00057</accession>
<dbReference type="PIR" id="B00047">
    <property type="entry name" value="CCCS"/>
</dbReference>
<dbReference type="iPTMnet" id="P00057"/>
<dbReference type="eggNOG" id="KOG3453">
    <property type="taxonomic scope" value="Eukaryota"/>
</dbReference>
<dbReference type="GO" id="GO:0005758">
    <property type="term" value="C:mitochondrial intermembrane space"/>
    <property type="evidence" value="ECO:0007669"/>
    <property type="project" value="UniProtKB-SubCell"/>
</dbReference>
<dbReference type="GO" id="GO:0009055">
    <property type="term" value="F:electron transfer activity"/>
    <property type="evidence" value="ECO:0007669"/>
    <property type="project" value="InterPro"/>
</dbReference>
<dbReference type="GO" id="GO:0020037">
    <property type="term" value="F:heme binding"/>
    <property type="evidence" value="ECO:0007669"/>
    <property type="project" value="InterPro"/>
</dbReference>
<dbReference type="GO" id="GO:0046872">
    <property type="term" value="F:metal ion binding"/>
    <property type="evidence" value="ECO:0007669"/>
    <property type="project" value="UniProtKB-KW"/>
</dbReference>
<dbReference type="FunFam" id="1.10.760.10:FF:000001">
    <property type="entry name" value="Cytochrome c iso-1"/>
    <property type="match status" value="1"/>
</dbReference>
<dbReference type="Gene3D" id="1.10.760.10">
    <property type="entry name" value="Cytochrome c-like domain"/>
    <property type="match status" value="1"/>
</dbReference>
<dbReference type="InterPro" id="IPR009056">
    <property type="entry name" value="Cyt_c-like_dom"/>
</dbReference>
<dbReference type="InterPro" id="IPR036909">
    <property type="entry name" value="Cyt_c-like_dom_sf"/>
</dbReference>
<dbReference type="InterPro" id="IPR002327">
    <property type="entry name" value="Cyt_c_1A/1B"/>
</dbReference>
<dbReference type="PANTHER" id="PTHR11961">
    <property type="entry name" value="CYTOCHROME C"/>
    <property type="match status" value="1"/>
</dbReference>
<dbReference type="Pfam" id="PF00034">
    <property type="entry name" value="Cytochrom_C"/>
    <property type="match status" value="1"/>
</dbReference>
<dbReference type="PRINTS" id="PR00604">
    <property type="entry name" value="CYTCHRMECIAB"/>
</dbReference>
<dbReference type="SUPFAM" id="SSF46626">
    <property type="entry name" value="Cytochrome c"/>
    <property type="match status" value="1"/>
</dbReference>
<dbReference type="PROSITE" id="PS51007">
    <property type="entry name" value="CYTC"/>
    <property type="match status" value="1"/>
</dbReference>